<sequence length="225" mass="23762">MSFNTIAQWFALNSDLLLTATWQTLYMVAIAGAVGFALGIPLGVILHTTKKEGLLENLPLNRALGAVVNIGRSVPFLVLMVAIIPVTKLIVGTFIGTTAAIVPLTIGAIPFVARLIESALLEVPTGLVEAAQSMGATPLQIIRKVLLPEALPTILNSVTITLVTLVSYSAMAGTVGGGGLGDVAIRYGFHRYDITIMAVTVVMLIVLVQIIQSIGDALVRRVDHR</sequence>
<feature type="chain" id="PRO_0000060105" description="Probable D-methionine transport system permease protein MetI">
    <location>
        <begin position="1"/>
        <end position="225"/>
    </location>
</feature>
<feature type="transmembrane region" description="Helical" evidence="2">
    <location>
        <begin position="25"/>
        <end position="45"/>
    </location>
</feature>
<feature type="transmembrane region" description="Helical" evidence="2">
    <location>
        <begin position="62"/>
        <end position="84"/>
    </location>
</feature>
<feature type="transmembrane region" description="Helical" evidence="2">
    <location>
        <begin position="101"/>
        <end position="121"/>
    </location>
</feature>
<feature type="transmembrane region" description="Helical" evidence="2">
    <location>
        <begin position="160"/>
        <end position="180"/>
    </location>
</feature>
<feature type="transmembrane region" description="Helical" evidence="2">
    <location>
        <begin position="194"/>
        <end position="214"/>
    </location>
</feature>
<feature type="domain" description="ABC transmembrane type-1" evidence="2">
    <location>
        <begin position="21"/>
        <end position="212"/>
    </location>
</feature>
<accession>Q9KTJ6</accession>
<gene>
    <name type="primary">metI</name>
    <name type="ordered locus">VC_0906</name>
</gene>
<dbReference type="EMBL" id="AE003852">
    <property type="protein sequence ID" value="AAF94068.1"/>
    <property type="molecule type" value="Genomic_DNA"/>
</dbReference>
<dbReference type="PIR" id="B82266">
    <property type="entry name" value="B82266"/>
</dbReference>
<dbReference type="RefSeq" id="NP_230553.1">
    <property type="nucleotide sequence ID" value="NC_002505.1"/>
</dbReference>
<dbReference type="RefSeq" id="WP_000009571.1">
    <property type="nucleotide sequence ID" value="NZ_LT906614.1"/>
</dbReference>
<dbReference type="SMR" id="Q9KTJ6"/>
<dbReference type="STRING" id="243277.VC_0906"/>
<dbReference type="DNASU" id="2614197"/>
<dbReference type="EnsemblBacteria" id="AAF94068">
    <property type="protein sequence ID" value="AAF94068"/>
    <property type="gene ID" value="VC_0906"/>
</dbReference>
<dbReference type="KEGG" id="vch:VC_0906"/>
<dbReference type="PATRIC" id="fig|243277.26.peg.863"/>
<dbReference type="eggNOG" id="COG2011">
    <property type="taxonomic scope" value="Bacteria"/>
</dbReference>
<dbReference type="HOGENOM" id="CLU_077375_0_1_6"/>
<dbReference type="Proteomes" id="UP000000584">
    <property type="component" value="Chromosome 1"/>
</dbReference>
<dbReference type="GO" id="GO:0005886">
    <property type="term" value="C:plasma membrane"/>
    <property type="evidence" value="ECO:0000318"/>
    <property type="project" value="GO_Central"/>
</dbReference>
<dbReference type="GO" id="GO:0048473">
    <property type="term" value="P:D-methionine transmembrane transport"/>
    <property type="evidence" value="ECO:0000318"/>
    <property type="project" value="GO_Central"/>
</dbReference>
<dbReference type="CDD" id="cd06261">
    <property type="entry name" value="TM_PBP2"/>
    <property type="match status" value="1"/>
</dbReference>
<dbReference type="FunFam" id="1.10.3720.10:FF:000002">
    <property type="entry name" value="D-methionine ABC transporter permease MetI"/>
    <property type="match status" value="1"/>
</dbReference>
<dbReference type="Gene3D" id="1.10.3720.10">
    <property type="entry name" value="MetI-like"/>
    <property type="match status" value="1"/>
</dbReference>
<dbReference type="InterPro" id="IPR051322">
    <property type="entry name" value="AA_ABC_Transporter_Permease"/>
</dbReference>
<dbReference type="InterPro" id="IPR000515">
    <property type="entry name" value="MetI-like"/>
</dbReference>
<dbReference type="InterPro" id="IPR035906">
    <property type="entry name" value="MetI-like_sf"/>
</dbReference>
<dbReference type="NCBIfam" id="NF008049">
    <property type="entry name" value="PRK10782.1"/>
    <property type="match status" value="1"/>
</dbReference>
<dbReference type="PANTHER" id="PTHR30450">
    <property type="entry name" value="ABC TRANSPORTER PERMEASE"/>
    <property type="match status" value="1"/>
</dbReference>
<dbReference type="PANTHER" id="PTHR30450:SF1">
    <property type="entry name" value="D-METHIONINE TRANSPORT SYSTEM PERMEASE PROTEIN METI-RELATED"/>
    <property type="match status" value="1"/>
</dbReference>
<dbReference type="Pfam" id="PF00528">
    <property type="entry name" value="BPD_transp_1"/>
    <property type="match status" value="1"/>
</dbReference>
<dbReference type="SUPFAM" id="SSF161098">
    <property type="entry name" value="MetI-like"/>
    <property type="match status" value="1"/>
</dbReference>
<dbReference type="PROSITE" id="PS50928">
    <property type="entry name" value="ABC_TM1"/>
    <property type="match status" value="1"/>
</dbReference>
<proteinExistence type="inferred from homology"/>
<organism>
    <name type="scientific">Vibrio cholerae serotype O1 (strain ATCC 39315 / El Tor Inaba N16961)</name>
    <dbReference type="NCBI Taxonomy" id="243277"/>
    <lineage>
        <taxon>Bacteria</taxon>
        <taxon>Pseudomonadati</taxon>
        <taxon>Pseudomonadota</taxon>
        <taxon>Gammaproteobacteria</taxon>
        <taxon>Vibrionales</taxon>
        <taxon>Vibrionaceae</taxon>
        <taxon>Vibrio</taxon>
    </lineage>
</organism>
<keyword id="KW-0029">Amino-acid transport</keyword>
<keyword id="KW-0997">Cell inner membrane</keyword>
<keyword id="KW-1003">Cell membrane</keyword>
<keyword id="KW-0472">Membrane</keyword>
<keyword id="KW-1185">Reference proteome</keyword>
<keyword id="KW-0812">Transmembrane</keyword>
<keyword id="KW-1133">Transmembrane helix</keyword>
<keyword id="KW-0813">Transport</keyword>
<reference key="1">
    <citation type="journal article" date="2000" name="Nature">
        <title>DNA sequence of both chromosomes of the cholera pathogen Vibrio cholerae.</title>
        <authorList>
            <person name="Heidelberg J.F."/>
            <person name="Eisen J.A."/>
            <person name="Nelson W.C."/>
            <person name="Clayton R.A."/>
            <person name="Gwinn M.L."/>
            <person name="Dodson R.J."/>
            <person name="Haft D.H."/>
            <person name="Hickey E.K."/>
            <person name="Peterson J.D."/>
            <person name="Umayam L.A."/>
            <person name="Gill S.R."/>
            <person name="Nelson K.E."/>
            <person name="Read T.D."/>
            <person name="Tettelin H."/>
            <person name="Richardson D.L."/>
            <person name="Ermolaeva M.D."/>
            <person name="Vamathevan J.J."/>
            <person name="Bass S."/>
            <person name="Qin H."/>
            <person name="Dragoi I."/>
            <person name="Sellers P."/>
            <person name="McDonald L.A."/>
            <person name="Utterback T.R."/>
            <person name="Fleischmann R.D."/>
            <person name="Nierman W.C."/>
            <person name="White O."/>
            <person name="Salzberg S.L."/>
            <person name="Smith H.O."/>
            <person name="Colwell R.R."/>
            <person name="Mekalanos J.J."/>
            <person name="Venter J.C."/>
            <person name="Fraser C.M."/>
        </authorList>
    </citation>
    <scope>NUCLEOTIDE SEQUENCE [LARGE SCALE GENOMIC DNA]</scope>
    <source>
        <strain>ATCC 39315 / El Tor Inaba N16961</strain>
    </source>
</reference>
<evidence type="ECO:0000250" key="1"/>
<evidence type="ECO:0000255" key="2">
    <source>
        <dbReference type="PROSITE-ProRule" id="PRU00441"/>
    </source>
</evidence>
<evidence type="ECO:0000305" key="3"/>
<comment type="function">
    <text evidence="1">Part of the binding-protein-dependent transport system for D-methionine. Probably responsible for the translocation of the substrate across the membrane (By similarity).</text>
</comment>
<comment type="subcellular location">
    <subcellularLocation>
        <location evidence="1">Cell inner membrane</location>
        <topology evidence="2">Multi-pass membrane protein</topology>
    </subcellularLocation>
</comment>
<comment type="similarity">
    <text evidence="3">Belongs to the binding-protein-dependent transport system permease family. CysTW subfamily.</text>
</comment>
<name>METI_VIBCH</name>
<protein>
    <recommendedName>
        <fullName>Probable D-methionine transport system permease protein MetI</fullName>
    </recommendedName>
</protein>